<organism>
    <name type="scientific">Shigella sonnei (strain Ss046)</name>
    <dbReference type="NCBI Taxonomy" id="300269"/>
    <lineage>
        <taxon>Bacteria</taxon>
        <taxon>Pseudomonadati</taxon>
        <taxon>Pseudomonadota</taxon>
        <taxon>Gammaproteobacteria</taxon>
        <taxon>Enterobacterales</taxon>
        <taxon>Enterobacteriaceae</taxon>
        <taxon>Shigella</taxon>
    </lineage>
</organism>
<dbReference type="EMBL" id="CP000038">
    <property type="protein sequence ID" value="AAZ89944.1"/>
    <property type="molecule type" value="Genomic_DNA"/>
</dbReference>
<dbReference type="RefSeq" id="WP_000829812.1">
    <property type="nucleotide sequence ID" value="NC_007384.1"/>
</dbReference>
<dbReference type="SMR" id="Q3YX18"/>
<dbReference type="GeneID" id="93778756"/>
<dbReference type="KEGG" id="ssn:SSON_3371"/>
<dbReference type="HOGENOM" id="CLU_046483_2_1_6"/>
<dbReference type="Proteomes" id="UP000002529">
    <property type="component" value="Chromosome"/>
</dbReference>
<dbReference type="GO" id="GO:0022627">
    <property type="term" value="C:cytosolic small ribosomal subunit"/>
    <property type="evidence" value="ECO:0007669"/>
    <property type="project" value="TreeGrafter"/>
</dbReference>
<dbReference type="GO" id="GO:0003723">
    <property type="term" value="F:RNA binding"/>
    <property type="evidence" value="ECO:0007669"/>
    <property type="project" value="TreeGrafter"/>
</dbReference>
<dbReference type="GO" id="GO:0003735">
    <property type="term" value="F:structural constituent of ribosome"/>
    <property type="evidence" value="ECO:0007669"/>
    <property type="project" value="InterPro"/>
</dbReference>
<dbReference type="GO" id="GO:0006412">
    <property type="term" value="P:translation"/>
    <property type="evidence" value="ECO:0007669"/>
    <property type="project" value="UniProtKB-UniRule"/>
</dbReference>
<dbReference type="FunFam" id="3.30.230.10:FF:000001">
    <property type="entry name" value="30S ribosomal protein S9"/>
    <property type="match status" value="1"/>
</dbReference>
<dbReference type="Gene3D" id="3.30.230.10">
    <property type="match status" value="1"/>
</dbReference>
<dbReference type="HAMAP" id="MF_00532_B">
    <property type="entry name" value="Ribosomal_uS9_B"/>
    <property type="match status" value="1"/>
</dbReference>
<dbReference type="InterPro" id="IPR020568">
    <property type="entry name" value="Ribosomal_Su5_D2-typ_SF"/>
</dbReference>
<dbReference type="InterPro" id="IPR000754">
    <property type="entry name" value="Ribosomal_uS9"/>
</dbReference>
<dbReference type="InterPro" id="IPR023035">
    <property type="entry name" value="Ribosomal_uS9_bac/plastid"/>
</dbReference>
<dbReference type="InterPro" id="IPR020574">
    <property type="entry name" value="Ribosomal_uS9_CS"/>
</dbReference>
<dbReference type="InterPro" id="IPR014721">
    <property type="entry name" value="Ribsml_uS5_D2-typ_fold_subgr"/>
</dbReference>
<dbReference type="NCBIfam" id="NF001099">
    <property type="entry name" value="PRK00132.1"/>
    <property type="match status" value="1"/>
</dbReference>
<dbReference type="PANTHER" id="PTHR21569">
    <property type="entry name" value="RIBOSOMAL PROTEIN S9"/>
    <property type="match status" value="1"/>
</dbReference>
<dbReference type="PANTHER" id="PTHR21569:SF1">
    <property type="entry name" value="SMALL RIBOSOMAL SUBUNIT PROTEIN US9M"/>
    <property type="match status" value="1"/>
</dbReference>
<dbReference type="Pfam" id="PF00380">
    <property type="entry name" value="Ribosomal_S9"/>
    <property type="match status" value="1"/>
</dbReference>
<dbReference type="SUPFAM" id="SSF54211">
    <property type="entry name" value="Ribosomal protein S5 domain 2-like"/>
    <property type="match status" value="1"/>
</dbReference>
<dbReference type="PROSITE" id="PS00360">
    <property type="entry name" value="RIBOSOMAL_S9"/>
    <property type="match status" value="1"/>
</dbReference>
<keyword id="KW-1185">Reference proteome</keyword>
<keyword id="KW-0687">Ribonucleoprotein</keyword>
<keyword id="KW-0689">Ribosomal protein</keyword>
<proteinExistence type="inferred from homology"/>
<name>RS9_SHISS</name>
<evidence type="ECO:0000255" key="1">
    <source>
        <dbReference type="HAMAP-Rule" id="MF_00532"/>
    </source>
</evidence>
<evidence type="ECO:0000305" key="2"/>
<feature type="chain" id="PRO_1000051331" description="Small ribosomal subunit protein uS9">
    <location>
        <begin position="1"/>
        <end position="130"/>
    </location>
</feature>
<gene>
    <name evidence="1" type="primary">rpsI</name>
    <name type="ordered locus">SSON_3371</name>
</gene>
<reference key="1">
    <citation type="journal article" date="2005" name="Nucleic Acids Res.">
        <title>Genome dynamics and diversity of Shigella species, the etiologic agents of bacillary dysentery.</title>
        <authorList>
            <person name="Yang F."/>
            <person name="Yang J."/>
            <person name="Zhang X."/>
            <person name="Chen L."/>
            <person name="Jiang Y."/>
            <person name="Yan Y."/>
            <person name="Tang X."/>
            <person name="Wang J."/>
            <person name="Xiong Z."/>
            <person name="Dong J."/>
            <person name="Xue Y."/>
            <person name="Zhu Y."/>
            <person name="Xu X."/>
            <person name="Sun L."/>
            <person name="Chen S."/>
            <person name="Nie H."/>
            <person name="Peng J."/>
            <person name="Xu J."/>
            <person name="Wang Y."/>
            <person name="Yuan Z."/>
            <person name="Wen Y."/>
            <person name="Yao Z."/>
            <person name="Shen Y."/>
            <person name="Qiang B."/>
            <person name="Hou Y."/>
            <person name="Yu J."/>
            <person name="Jin Q."/>
        </authorList>
    </citation>
    <scope>NUCLEOTIDE SEQUENCE [LARGE SCALE GENOMIC DNA]</scope>
    <source>
        <strain>Ss046</strain>
    </source>
</reference>
<protein>
    <recommendedName>
        <fullName evidence="1">Small ribosomal subunit protein uS9</fullName>
    </recommendedName>
    <alternativeName>
        <fullName evidence="2">30S ribosomal protein S9</fullName>
    </alternativeName>
</protein>
<accession>Q3YX18</accession>
<sequence>MAENQYYGTGRRKNSAARVFIKPGNGKIVINQRSLEQYFGRETARMVVRQPLELVDMVEKLDLYITVKGGGISGQAGAIRHGITRALMEYDESLRSELRKAGFVTRDARQVERKKVGLRKARRRPQFSKR</sequence>
<comment type="similarity">
    <text evidence="1">Belongs to the universal ribosomal protein uS9 family.</text>
</comment>